<dbReference type="EC" id="2.8.1.10" evidence="1"/>
<dbReference type="EMBL" id="CP001063">
    <property type="protein sequence ID" value="ACD08746.1"/>
    <property type="molecule type" value="Genomic_DNA"/>
</dbReference>
<dbReference type="RefSeq" id="WP_000944094.1">
    <property type="nucleotide sequence ID" value="NC_010658.1"/>
</dbReference>
<dbReference type="SMR" id="B2TWH8"/>
<dbReference type="STRING" id="344609.SbBS512_E4481"/>
<dbReference type="GeneID" id="93777904"/>
<dbReference type="KEGG" id="sbc:SbBS512_E4481"/>
<dbReference type="HOGENOM" id="CLU_062233_1_0_6"/>
<dbReference type="UniPathway" id="UPA00060"/>
<dbReference type="Proteomes" id="UP000001030">
    <property type="component" value="Chromosome"/>
</dbReference>
<dbReference type="GO" id="GO:0005737">
    <property type="term" value="C:cytoplasm"/>
    <property type="evidence" value="ECO:0007669"/>
    <property type="project" value="UniProtKB-SubCell"/>
</dbReference>
<dbReference type="GO" id="GO:1990107">
    <property type="term" value="F:thiazole synthase activity"/>
    <property type="evidence" value="ECO:0007669"/>
    <property type="project" value="UniProtKB-EC"/>
</dbReference>
<dbReference type="GO" id="GO:0009229">
    <property type="term" value="P:thiamine diphosphate biosynthetic process"/>
    <property type="evidence" value="ECO:0007669"/>
    <property type="project" value="UniProtKB-UniRule"/>
</dbReference>
<dbReference type="CDD" id="cd04728">
    <property type="entry name" value="ThiG"/>
    <property type="match status" value="1"/>
</dbReference>
<dbReference type="FunFam" id="3.20.20.70:FF:000049">
    <property type="entry name" value="Thiazole synthase"/>
    <property type="match status" value="1"/>
</dbReference>
<dbReference type="Gene3D" id="3.20.20.70">
    <property type="entry name" value="Aldolase class I"/>
    <property type="match status" value="1"/>
</dbReference>
<dbReference type="HAMAP" id="MF_00443">
    <property type="entry name" value="ThiG"/>
    <property type="match status" value="1"/>
</dbReference>
<dbReference type="InterPro" id="IPR013785">
    <property type="entry name" value="Aldolase_TIM"/>
</dbReference>
<dbReference type="InterPro" id="IPR033983">
    <property type="entry name" value="Thiazole_synthase_ThiG"/>
</dbReference>
<dbReference type="InterPro" id="IPR008867">
    <property type="entry name" value="ThiG"/>
</dbReference>
<dbReference type="PANTHER" id="PTHR34266">
    <property type="entry name" value="THIAZOLE SYNTHASE"/>
    <property type="match status" value="1"/>
</dbReference>
<dbReference type="PANTHER" id="PTHR34266:SF2">
    <property type="entry name" value="THIAZOLE SYNTHASE"/>
    <property type="match status" value="1"/>
</dbReference>
<dbReference type="Pfam" id="PF05690">
    <property type="entry name" value="ThiG"/>
    <property type="match status" value="1"/>
</dbReference>
<dbReference type="SUPFAM" id="SSF110399">
    <property type="entry name" value="ThiG-like"/>
    <property type="match status" value="1"/>
</dbReference>
<proteinExistence type="inferred from homology"/>
<organism>
    <name type="scientific">Shigella boydii serotype 18 (strain CDC 3083-94 / BS512)</name>
    <dbReference type="NCBI Taxonomy" id="344609"/>
    <lineage>
        <taxon>Bacteria</taxon>
        <taxon>Pseudomonadati</taxon>
        <taxon>Pseudomonadota</taxon>
        <taxon>Gammaproteobacteria</taxon>
        <taxon>Enterobacterales</taxon>
        <taxon>Enterobacteriaceae</taxon>
        <taxon>Shigella</taxon>
    </lineage>
</organism>
<sequence>MLRIADKTFDSHLFTGTGKFASSQLMVEAIRASGSQLVTLAMKRVDLRQHNDAILEPLIAAGVTLLPNTSGAKTAEEAIFAAHLAREALGTNWLKLEIHPDARWLLPDPIETLKAAEMLVQQGFVVLPYCGADPVLCKRLEEVGCAAVMPLGAPIGSNQGLETRAMLEIIIQQATVPVVVDAGIGVPSHAAQALEMGADAVLVNTAIAVADDPVNMAKAFRLAVEAGLLARQSGPGSRSHFAHATSPLTGFLEASA</sequence>
<keyword id="KW-0963">Cytoplasm</keyword>
<keyword id="KW-1185">Reference proteome</keyword>
<keyword id="KW-0704">Schiff base</keyword>
<keyword id="KW-0784">Thiamine biosynthesis</keyword>
<keyword id="KW-0808">Transferase</keyword>
<reference key="1">
    <citation type="submission" date="2008-05" db="EMBL/GenBank/DDBJ databases">
        <title>Complete sequence of Shigella boydii serotype 18 strain BS512.</title>
        <authorList>
            <person name="Rasko D.A."/>
            <person name="Rosovitz M."/>
            <person name="Maurelli A.T."/>
            <person name="Myers G."/>
            <person name="Seshadri R."/>
            <person name="Cer R."/>
            <person name="Jiang L."/>
            <person name="Ravel J."/>
            <person name="Sebastian Y."/>
        </authorList>
    </citation>
    <scope>NUCLEOTIDE SEQUENCE [LARGE SCALE GENOMIC DNA]</scope>
    <source>
        <strain>CDC 3083-94 / BS512</strain>
    </source>
</reference>
<protein>
    <recommendedName>
        <fullName evidence="1">Thiazole synthase</fullName>
        <ecNumber evidence="1">2.8.1.10</ecNumber>
    </recommendedName>
</protein>
<name>THIG_SHIB3</name>
<comment type="function">
    <text evidence="1">Catalyzes the rearrangement of 1-deoxy-D-xylulose 5-phosphate (DXP) to produce the thiazole phosphate moiety of thiamine. Sulfur is provided by the thiocarboxylate moiety of the carrier protein ThiS. In vitro, sulfur can be provided by H(2)S.</text>
</comment>
<comment type="catalytic activity">
    <reaction evidence="1">
        <text>[ThiS sulfur-carrier protein]-C-terminal-Gly-aminoethanethioate + 2-iminoacetate + 1-deoxy-D-xylulose 5-phosphate = [ThiS sulfur-carrier protein]-C-terminal Gly-Gly + 2-[(2R,5Z)-2-carboxy-4-methylthiazol-5(2H)-ylidene]ethyl phosphate + 2 H2O + H(+)</text>
        <dbReference type="Rhea" id="RHEA:26297"/>
        <dbReference type="Rhea" id="RHEA-COMP:12909"/>
        <dbReference type="Rhea" id="RHEA-COMP:19908"/>
        <dbReference type="ChEBI" id="CHEBI:15377"/>
        <dbReference type="ChEBI" id="CHEBI:15378"/>
        <dbReference type="ChEBI" id="CHEBI:57792"/>
        <dbReference type="ChEBI" id="CHEBI:62899"/>
        <dbReference type="ChEBI" id="CHEBI:77846"/>
        <dbReference type="ChEBI" id="CHEBI:90778"/>
        <dbReference type="ChEBI" id="CHEBI:232372"/>
        <dbReference type="EC" id="2.8.1.10"/>
    </reaction>
</comment>
<comment type="pathway">
    <text evidence="1">Cofactor biosynthesis; thiamine diphosphate biosynthesis.</text>
</comment>
<comment type="subunit">
    <text evidence="1">Homotetramer. Forms heterodimers with either ThiH or ThiS.</text>
</comment>
<comment type="subcellular location">
    <subcellularLocation>
        <location evidence="1">Cytoplasm</location>
    </subcellularLocation>
</comment>
<comment type="similarity">
    <text evidence="1">Belongs to the ThiG family.</text>
</comment>
<gene>
    <name evidence="1" type="primary">thiG</name>
    <name type="ordered locus">SbBS512_E4481</name>
</gene>
<evidence type="ECO:0000255" key="1">
    <source>
        <dbReference type="HAMAP-Rule" id="MF_00443"/>
    </source>
</evidence>
<accession>B2TWH8</accession>
<feature type="chain" id="PRO_1000196901" description="Thiazole synthase">
    <location>
        <begin position="1"/>
        <end position="256"/>
    </location>
</feature>
<feature type="active site" description="Schiff-base intermediate with DXP" evidence="1">
    <location>
        <position position="95"/>
    </location>
</feature>
<feature type="binding site" evidence="1">
    <location>
        <position position="156"/>
    </location>
    <ligand>
        <name>1-deoxy-D-xylulose 5-phosphate</name>
        <dbReference type="ChEBI" id="CHEBI:57792"/>
    </ligand>
</feature>
<feature type="binding site" evidence="1">
    <location>
        <begin position="182"/>
        <end position="183"/>
    </location>
    <ligand>
        <name>1-deoxy-D-xylulose 5-phosphate</name>
        <dbReference type="ChEBI" id="CHEBI:57792"/>
    </ligand>
</feature>
<feature type="binding site" evidence="1">
    <location>
        <begin position="204"/>
        <end position="205"/>
    </location>
    <ligand>
        <name>1-deoxy-D-xylulose 5-phosphate</name>
        <dbReference type="ChEBI" id="CHEBI:57792"/>
    </ligand>
</feature>